<feature type="chain" id="PRO_1000116421" description="SsrA-binding protein">
    <location>
        <begin position="1"/>
        <end position="160"/>
    </location>
</feature>
<dbReference type="EMBL" id="CU928160">
    <property type="protein sequence ID" value="CAQ99568.1"/>
    <property type="molecule type" value="Genomic_DNA"/>
</dbReference>
<dbReference type="RefSeq" id="WP_000162574.1">
    <property type="nucleotide sequence ID" value="NC_011741.1"/>
</dbReference>
<dbReference type="SMR" id="B7M989"/>
<dbReference type="GeneID" id="93774470"/>
<dbReference type="KEGG" id="ecr:ECIAI1_2741"/>
<dbReference type="HOGENOM" id="CLU_108953_3_0_6"/>
<dbReference type="GO" id="GO:0005829">
    <property type="term" value="C:cytosol"/>
    <property type="evidence" value="ECO:0007669"/>
    <property type="project" value="TreeGrafter"/>
</dbReference>
<dbReference type="GO" id="GO:0003723">
    <property type="term" value="F:RNA binding"/>
    <property type="evidence" value="ECO:0007669"/>
    <property type="project" value="UniProtKB-UniRule"/>
</dbReference>
<dbReference type="GO" id="GO:0070929">
    <property type="term" value="P:trans-translation"/>
    <property type="evidence" value="ECO:0007669"/>
    <property type="project" value="UniProtKB-UniRule"/>
</dbReference>
<dbReference type="CDD" id="cd09294">
    <property type="entry name" value="SmpB"/>
    <property type="match status" value="1"/>
</dbReference>
<dbReference type="FunFam" id="2.40.280.10:FF:000001">
    <property type="entry name" value="SsrA-binding protein"/>
    <property type="match status" value="1"/>
</dbReference>
<dbReference type="Gene3D" id="2.40.280.10">
    <property type="match status" value="1"/>
</dbReference>
<dbReference type="HAMAP" id="MF_00023">
    <property type="entry name" value="SmpB"/>
    <property type="match status" value="1"/>
</dbReference>
<dbReference type="InterPro" id="IPR023620">
    <property type="entry name" value="SmpB"/>
</dbReference>
<dbReference type="InterPro" id="IPR000037">
    <property type="entry name" value="SsrA-bd_prot"/>
</dbReference>
<dbReference type="InterPro" id="IPR020081">
    <property type="entry name" value="SsrA-bd_prot_CS"/>
</dbReference>
<dbReference type="NCBIfam" id="NF003843">
    <property type="entry name" value="PRK05422.1"/>
    <property type="match status" value="1"/>
</dbReference>
<dbReference type="NCBIfam" id="TIGR00086">
    <property type="entry name" value="smpB"/>
    <property type="match status" value="1"/>
</dbReference>
<dbReference type="PANTHER" id="PTHR30308:SF2">
    <property type="entry name" value="SSRA-BINDING PROTEIN"/>
    <property type="match status" value="1"/>
</dbReference>
<dbReference type="PANTHER" id="PTHR30308">
    <property type="entry name" value="TMRNA-BINDING COMPONENT OF TRANS-TRANSLATION TAGGING COMPLEX"/>
    <property type="match status" value="1"/>
</dbReference>
<dbReference type="Pfam" id="PF01668">
    <property type="entry name" value="SmpB"/>
    <property type="match status" value="1"/>
</dbReference>
<dbReference type="SUPFAM" id="SSF74982">
    <property type="entry name" value="Small protein B (SmpB)"/>
    <property type="match status" value="1"/>
</dbReference>
<dbReference type="PROSITE" id="PS01317">
    <property type="entry name" value="SSRP"/>
    <property type="match status" value="1"/>
</dbReference>
<evidence type="ECO:0000255" key="1">
    <source>
        <dbReference type="HAMAP-Rule" id="MF_00023"/>
    </source>
</evidence>
<sequence length="160" mass="18269">MTKKKAHKPGSATIALNKRARHEYFIEEEFEAGLALQGWEVKSLRAGKANISDSYVLLRDGEAFLFGANITPMAVASTHVVCDPTRTRKLLLNQRELDSLYGRVNREGYTVVALSLYWKNAWCKVKIGVAKGKKQHDKRSDIKEREWQVDKARIMKNAHR</sequence>
<accession>B7M989</accession>
<gene>
    <name evidence="1" type="primary">smpB</name>
    <name type="ordered locus">ECIAI1_2741</name>
</gene>
<reference key="1">
    <citation type="journal article" date="2009" name="PLoS Genet.">
        <title>Organised genome dynamics in the Escherichia coli species results in highly diverse adaptive paths.</title>
        <authorList>
            <person name="Touchon M."/>
            <person name="Hoede C."/>
            <person name="Tenaillon O."/>
            <person name="Barbe V."/>
            <person name="Baeriswyl S."/>
            <person name="Bidet P."/>
            <person name="Bingen E."/>
            <person name="Bonacorsi S."/>
            <person name="Bouchier C."/>
            <person name="Bouvet O."/>
            <person name="Calteau A."/>
            <person name="Chiapello H."/>
            <person name="Clermont O."/>
            <person name="Cruveiller S."/>
            <person name="Danchin A."/>
            <person name="Diard M."/>
            <person name="Dossat C."/>
            <person name="Karoui M.E."/>
            <person name="Frapy E."/>
            <person name="Garry L."/>
            <person name="Ghigo J.M."/>
            <person name="Gilles A.M."/>
            <person name="Johnson J."/>
            <person name="Le Bouguenec C."/>
            <person name="Lescat M."/>
            <person name="Mangenot S."/>
            <person name="Martinez-Jehanne V."/>
            <person name="Matic I."/>
            <person name="Nassif X."/>
            <person name="Oztas S."/>
            <person name="Petit M.A."/>
            <person name="Pichon C."/>
            <person name="Rouy Z."/>
            <person name="Ruf C.S."/>
            <person name="Schneider D."/>
            <person name="Tourret J."/>
            <person name="Vacherie B."/>
            <person name="Vallenet D."/>
            <person name="Medigue C."/>
            <person name="Rocha E.P.C."/>
            <person name="Denamur E."/>
        </authorList>
    </citation>
    <scope>NUCLEOTIDE SEQUENCE [LARGE SCALE GENOMIC DNA]</scope>
    <source>
        <strain>IAI1</strain>
    </source>
</reference>
<organism>
    <name type="scientific">Escherichia coli O8 (strain IAI1)</name>
    <dbReference type="NCBI Taxonomy" id="585034"/>
    <lineage>
        <taxon>Bacteria</taxon>
        <taxon>Pseudomonadati</taxon>
        <taxon>Pseudomonadota</taxon>
        <taxon>Gammaproteobacteria</taxon>
        <taxon>Enterobacterales</taxon>
        <taxon>Enterobacteriaceae</taxon>
        <taxon>Escherichia</taxon>
    </lineage>
</organism>
<keyword id="KW-0963">Cytoplasm</keyword>
<keyword id="KW-0694">RNA-binding</keyword>
<comment type="function">
    <text evidence="1">Required for rescue of stalled ribosomes mediated by trans-translation. Binds to transfer-messenger RNA (tmRNA), required for stable association of tmRNA with ribosomes. tmRNA and SmpB together mimic tRNA shape, replacing the anticodon stem-loop with SmpB. tmRNA is encoded by the ssrA gene; the 2 termini fold to resemble tRNA(Ala) and it encodes a 'tag peptide', a short internal open reading frame. During trans-translation Ala-aminoacylated tmRNA acts like a tRNA, entering the A-site of stalled ribosomes, displacing the stalled mRNA. The ribosome then switches to translate the ORF on the tmRNA; the nascent peptide is terminated with the 'tag peptide' encoded by the tmRNA and targeted for degradation. The ribosome is freed to recommence translation, which seems to be the essential function of trans-translation.</text>
</comment>
<comment type="subcellular location">
    <subcellularLocation>
        <location evidence="1">Cytoplasm</location>
    </subcellularLocation>
    <text evidence="1">The tmRNA-SmpB complex associates with stalled 70S ribosomes.</text>
</comment>
<comment type="similarity">
    <text evidence="1">Belongs to the SmpB family.</text>
</comment>
<protein>
    <recommendedName>
        <fullName evidence="1">SsrA-binding protein</fullName>
    </recommendedName>
    <alternativeName>
        <fullName evidence="1">Small protein B</fullName>
    </alternativeName>
</protein>
<proteinExistence type="inferred from homology"/>
<name>SSRP_ECO8A</name>